<proteinExistence type="evidence at protein level"/>
<gene>
    <name type="primary">TDA1</name>
    <name type="ordered locus">YMR291W</name>
</gene>
<feature type="chain" id="PRO_0000086153" description="Serine/threonine-protein kinase TDA1">
    <location>
        <begin position="1"/>
        <end position="586"/>
    </location>
</feature>
<feature type="domain" description="Protein kinase" evidence="1">
    <location>
        <begin position="39"/>
        <end position="351"/>
    </location>
</feature>
<feature type="region of interest" description="Disordered" evidence="3">
    <location>
        <begin position="1"/>
        <end position="26"/>
    </location>
</feature>
<feature type="region of interest" description="Disordered" evidence="3">
    <location>
        <begin position="503"/>
        <end position="524"/>
    </location>
</feature>
<feature type="active site" description="Proton acceptor" evidence="1 2">
    <location>
        <position position="180"/>
    </location>
</feature>
<feature type="binding site" evidence="1">
    <location>
        <begin position="45"/>
        <end position="53"/>
    </location>
    <ligand>
        <name>ATP</name>
        <dbReference type="ChEBI" id="CHEBI:30616"/>
    </ligand>
</feature>
<feature type="binding site" evidence="1">
    <location>
        <position position="68"/>
    </location>
    <ligand>
        <name>ATP</name>
        <dbReference type="ChEBI" id="CHEBI:30616"/>
    </ligand>
</feature>
<feature type="modified residue" description="Phosphothreonine" evidence="11">
    <location>
        <position position="504"/>
    </location>
</feature>
<feature type="modified residue" description="Phosphoserine" evidence="11">
    <location>
        <position position="509"/>
    </location>
</feature>
<feature type="modified residue" description="Phosphoserine" evidence="10">
    <location>
        <position position="518"/>
    </location>
</feature>
<feature type="modified residue" description="Phosphothreonine" evidence="9">
    <location>
        <position position="538"/>
    </location>
</feature>
<feature type="modified residue" description="Phosphoserine" evidence="11">
    <location>
        <position position="578"/>
    </location>
</feature>
<name>TDA1_YEAST</name>
<comment type="function">
    <text evidence="4">Serine/threonine protein kinase shown to have protein phosphorylation activity in vitro.</text>
</comment>
<comment type="catalytic activity">
    <reaction>
        <text>L-seryl-[protein] + ATP = O-phospho-L-seryl-[protein] + ADP + H(+)</text>
        <dbReference type="Rhea" id="RHEA:17989"/>
        <dbReference type="Rhea" id="RHEA-COMP:9863"/>
        <dbReference type="Rhea" id="RHEA-COMP:11604"/>
        <dbReference type="ChEBI" id="CHEBI:15378"/>
        <dbReference type="ChEBI" id="CHEBI:29999"/>
        <dbReference type="ChEBI" id="CHEBI:30616"/>
        <dbReference type="ChEBI" id="CHEBI:83421"/>
        <dbReference type="ChEBI" id="CHEBI:456216"/>
        <dbReference type="EC" id="2.7.11.1"/>
    </reaction>
</comment>
<comment type="catalytic activity">
    <reaction>
        <text>L-threonyl-[protein] + ATP = O-phospho-L-threonyl-[protein] + ADP + H(+)</text>
        <dbReference type="Rhea" id="RHEA:46608"/>
        <dbReference type="Rhea" id="RHEA-COMP:11060"/>
        <dbReference type="Rhea" id="RHEA-COMP:11605"/>
        <dbReference type="ChEBI" id="CHEBI:15378"/>
        <dbReference type="ChEBI" id="CHEBI:30013"/>
        <dbReference type="ChEBI" id="CHEBI:30616"/>
        <dbReference type="ChEBI" id="CHEBI:61977"/>
        <dbReference type="ChEBI" id="CHEBI:456216"/>
        <dbReference type="EC" id="2.7.11.1"/>
    </reaction>
</comment>
<comment type="subunit">
    <text evidence="8">Interacts with RIM11.</text>
</comment>
<comment type="subcellular location">
    <subcellularLocation>
        <location evidence="5">Cytoplasm</location>
    </subcellularLocation>
    <subcellularLocation>
        <location evidence="5">Nucleus</location>
    </subcellularLocation>
</comment>
<comment type="disruption phenotype">
    <text evidence="7">Leads to cell death when overexpressing the camptothecin mimetic TOP1-T(722)A mutant.</text>
</comment>
<comment type="miscellaneous">
    <text evidence="6">Present with 10200 molecules/cell in log phase SD medium.</text>
</comment>
<comment type="similarity">
    <text evidence="1">Belongs to the protein kinase superfamily. Ser/Thr protein kinase family.</text>
</comment>
<reference key="1">
    <citation type="journal article" date="1997" name="Nature">
        <title>The nucleotide sequence of Saccharomyces cerevisiae chromosome XIII.</title>
        <authorList>
            <person name="Bowman S."/>
            <person name="Churcher C.M."/>
            <person name="Badcock K."/>
            <person name="Brown D."/>
            <person name="Chillingworth T."/>
            <person name="Connor R."/>
            <person name="Dedman K."/>
            <person name="Devlin K."/>
            <person name="Gentles S."/>
            <person name="Hamlin N."/>
            <person name="Hunt S."/>
            <person name="Jagels K."/>
            <person name="Lye G."/>
            <person name="Moule S."/>
            <person name="Odell C."/>
            <person name="Pearson D."/>
            <person name="Rajandream M.A."/>
            <person name="Rice P."/>
            <person name="Skelton J."/>
            <person name="Walsh S.V."/>
            <person name="Whitehead S."/>
            <person name="Barrell B.G."/>
        </authorList>
    </citation>
    <scope>NUCLEOTIDE SEQUENCE [LARGE SCALE GENOMIC DNA]</scope>
    <source>
        <strain>ATCC 204508 / S288c</strain>
    </source>
</reference>
<reference key="2">
    <citation type="journal article" date="2014" name="G3 (Bethesda)">
        <title>The reference genome sequence of Saccharomyces cerevisiae: Then and now.</title>
        <authorList>
            <person name="Engel S.R."/>
            <person name="Dietrich F.S."/>
            <person name="Fisk D.G."/>
            <person name="Binkley G."/>
            <person name="Balakrishnan R."/>
            <person name="Costanzo M.C."/>
            <person name="Dwight S.S."/>
            <person name="Hitz B.C."/>
            <person name="Karra K."/>
            <person name="Nash R.S."/>
            <person name="Weng S."/>
            <person name="Wong E.D."/>
            <person name="Lloyd P."/>
            <person name="Skrzypek M.S."/>
            <person name="Miyasato S.R."/>
            <person name="Simison M."/>
            <person name="Cherry J.M."/>
        </authorList>
    </citation>
    <scope>GENOME REANNOTATION</scope>
    <source>
        <strain>ATCC 204508 / S288c</strain>
    </source>
</reference>
<reference key="3">
    <citation type="journal article" date="2000" name="Nat. Genet.">
        <title>Analysis of yeast protein kinases using protein chips.</title>
        <authorList>
            <person name="Zhu H."/>
            <person name="Klemic J.F."/>
            <person name="Chang S."/>
            <person name="Bertone P."/>
            <person name="Casamayor A."/>
            <person name="Klemic K.G."/>
            <person name="Smith D."/>
            <person name="Gerstein M."/>
            <person name="Reed M.A."/>
            <person name="Snyder M."/>
        </authorList>
    </citation>
    <scope>FUNCTION</scope>
</reference>
<reference key="4">
    <citation type="journal article" date="2003" name="Nature">
        <title>Global analysis of protein localization in budding yeast.</title>
        <authorList>
            <person name="Huh W.-K."/>
            <person name="Falvo J.V."/>
            <person name="Gerke L.C."/>
            <person name="Carroll A.S."/>
            <person name="Howson R.W."/>
            <person name="Weissman J.S."/>
            <person name="O'Shea E.K."/>
        </authorList>
    </citation>
    <scope>SUBCELLULAR LOCATION [LARGE SCALE ANALYSIS]</scope>
</reference>
<reference key="5">
    <citation type="journal article" date="2003" name="Nature">
        <title>Global analysis of protein expression in yeast.</title>
        <authorList>
            <person name="Ghaemmaghami S."/>
            <person name="Huh W.-K."/>
            <person name="Bower K."/>
            <person name="Howson R.W."/>
            <person name="Belle A."/>
            <person name="Dephoure N."/>
            <person name="O'Shea E.K."/>
            <person name="Weissman J.S."/>
        </authorList>
    </citation>
    <scope>LEVEL OF PROTEIN EXPRESSION [LARGE SCALE ANALYSIS]</scope>
</reference>
<reference key="6">
    <citation type="journal article" date="2005" name="Mol. Cell. Proteomics">
        <title>Quantitative phosphoproteomics applied to the yeast pheromone signaling pathway.</title>
        <authorList>
            <person name="Gruhler A."/>
            <person name="Olsen J.V."/>
            <person name="Mohammed S."/>
            <person name="Mortensen P."/>
            <person name="Faergeman N.J."/>
            <person name="Mann M."/>
            <person name="Jensen O.N."/>
        </authorList>
    </citation>
    <scope>PHOSPHORYLATION [LARGE SCALE ANALYSIS] AT THR-538</scope>
    <scope>IDENTIFICATION BY MASS SPECTROMETRY [LARGE SCALE ANALYSIS]</scope>
    <source>
        <strain>YAL6B</strain>
    </source>
</reference>
<reference key="7">
    <citation type="journal article" date="2007" name="J. Proteome Res.">
        <title>Large-scale phosphorylation analysis of alpha-factor-arrested Saccharomyces cerevisiae.</title>
        <authorList>
            <person name="Li X."/>
            <person name="Gerber S.A."/>
            <person name="Rudner A.D."/>
            <person name="Beausoleil S.A."/>
            <person name="Haas W."/>
            <person name="Villen J."/>
            <person name="Elias J.E."/>
            <person name="Gygi S.P."/>
        </authorList>
    </citation>
    <scope>IDENTIFICATION BY MASS SPECTROMETRY [LARGE SCALE ANALYSIS]</scope>
    <source>
        <strain>ADR376</strain>
    </source>
</reference>
<reference key="8">
    <citation type="journal article" date="2007" name="Proc. Natl. Acad. Sci. U.S.A.">
        <title>Analysis of phosphorylation sites on proteins from Saccharomyces cerevisiae by electron transfer dissociation (ETD) mass spectrometry.</title>
        <authorList>
            <person name="Chi A."/>
            <person name="Huttenhower C."/>
            <person name="Geer L.Y."/>
            <person name="Coon J.J."/>
            <person name="Syka J.E.P."/>
            <person name="Bai D.L."/>
            <person name="Shabanowitz J."/>
            <person name="Burke D.J."/>
            <person name="Troyanskaya O.G."/>
            <person name="Hunt D.F."/>
        </authorList>
    </citation>
    <scope>PHOSPHORYLATION [LARGE SCALE ANALYSIS] AT SER-518</scope>
    <scope>IDENTIFICATION BY MASS SPECTROMETRY [LARGE SCALE ANALYSIS]</scope>
</reference>
<reference key="9">
    <citation type="journal article" date="2008" name="Mol. Cell. Proteomics">
        <title>A multidimensional chromatography technology for in-depth phosphoproteome analysis.</title>
        <authorList>
            <person name="Albuquerque C.P."/>
            <person name="Smolka M.B."/>
            <person name="Payne S.H."/>
            <person name="Bafna V."/>
            <person name="Eng J."/>
            <person name="Zhou H."/>
        </authorList>
    </citation>
    <scope>IDENTIFICATION BY MASS SPECTROMETRY [LARGE SCALE ANALYSIS]</scope>
</reference>
<reference key="10">
    <citation type="journal article" date="2009" name="Science">
        <title>Global analysis of Cdk1 substrate phosphorylation sites provides insights into evolution.</title>
        <authorList>
            <person name="Holt L.J."/>
            <person name="Tuch B.B."/>
            <person name="Villen J."/>
            <person name="Johnson A.D."/>
            <person name="Gygi S.P."/>
            <person name="Morgan D.O."/>
        </authorList>
    </citation>
    <scope>PHOSPHORYLATION [LARGE SCALE ANALYSIS] AT THR-504; SER-509 AND SER-578</scope>
    <scope>IDENTIFICATION BY MASS SPECTROMETRY [LARGE SCALE ANALYSIS]</scope>
</reference>
<reference key="11">
    <citation type="journal article" date="2011" name="Genome Res.">
        <title>Selective ploidy ablation, a high-throughput plasmid transfer protocol, identifies new genes affecting topoisomerase I-induced DNA damage.</title>
        <authorList>
            <person name="Reid R.J."/>
            <person name="Gonzalez-Barrera S."/>
            <person name="Sunjevaric I."/>
            <person name="Alvaro D."/>
            <person name="Ciccone S."/>
            <person name="Wagner M."/>
            <person name="Rothstein R."/>
        </authorList>
    </citation>
    <scope>DISRUPTION PHENOTYPE</scope>
</reference>
<reference key="12">
    <citation type="journal article" date="2011" name="Genes Dev.">
        <title>Diverse protein kinase interactions identified by protein microarrays reveal novel connections between cellular processes.</title>
        <authorList>
            <person name="Fasolo J."/>
            <person name="Sboner A."/>
            <person name="Sun M.G."/>
            <person name="Yu H."/>
            <person name="Chen R."/>
            <person name="Sharon D."/>
            <person name="Kim P.M."/>
            <person name="Gerstein M."/>
            <person name="Snyder M."/>
        </authorList>
    </citation>
    <scope>INTERACTION WITH RIM11</scope>
</reference>
<reference key="13">
    <citation type="journal article" date="2012" name="Proc. Natl. Acad. Sci. U.S.A.">
        <title>N-terminal acetylome analyses and functional insights of the N-terminal acetyltransferase NatB.</title>
        <authorList>
            <person name="Van Damme P."/>
            <person name="Lasa M."/>
            <person name="Polevoda B."/>
            <person name="Gazquez C."/>
            <person name="Elosegui-Artola A."/>
            <person name="Kim D.S."/>
            <person name="De Juan-Pardo E."/>
            <person name="Demeyer K."/>
            <person name="Hole K."/>
            <person name="Larrea E."/>
            <person name="Timmerman E."/>
            <person name="Prieto J."/>
            <person name="Arnesen T."/>
            <person name="Sherman F."/>
            <person name="Gevaert K."/>
            <person name="Aldabe R."/>
        </authorList>
    </citation>
    <scope>IDENTIFICATION BY MASS SPECTROMETRY [LARGE SCALE ANALYSIS]</scope>
</reference>
<protein>
    <recommendedName>
        <fullName>Serine/threonine-protein kinase TDA1</fullName>
    </recommendedName>
    <alternativeName>
        <fullName>Topoisomerase I damage affected protein 1</fullName>
        <ecNumber>2.7.11.1</ecNumber>
    </alternativeName>
</protein>
<sequence>MTTASSSASQLQQRLPEEKPWPQLSGSNADAQTFKCKYVTNHNSLGDGNFSVVKECMNIHTKDLYAMKLIKKQTVKNKIQLIQREFDLLRSISEKIRDMEKKNEHSLDIFEGHHHILQLFDYFETADNIVLITQLCQKGDLYEKIVENQCLDLETQVTSYCACLVSVLEFLHSQGIVHRDLKAENVLFRLRVNENEKNLQGEHHGDFKYDLLAHDLVLADFGLAAEYNTSKVNSLKEFVGTISYIAPEIVKCKGVGEMTPDQVGKLDKYGCPVDIWALGVLTYFMAFGYTPFDCTTDDETLECISKCDYYVDEQMMHDPKYEQFWNFVQCCFTIDPAVRRSAKNLKQHPFIKDYFATSNSLNTKDTPNFSFHPTIRRVSSTASMHTLRSPSKSRKTTTLAYLNMDGGSSETSTAFSSKMDLPDLYVDRTINSRERSLNRIRDTLKKTLSMTSLKPAGTFDYLHANKNGTSLSSSKSGLVKKNSTFVLDPKPPKNSLMNGCFSTTPESRSNFNTPKTLSRQGSSTSVKKYVNEVDLLLTPRTASMSSNDTTAINDYDTTNDKNPARKHAASFQVNVDDSDGDETMQI</sequence>
<accession>Q03533</accession>
<accession>D6W0B8</accession>
<organism>
    <name type="scientific">Saccharomyces cerevisiae (strain ATCC 204508 / S288c)</name>
    <name type="common">Baker's yeast</name>
    <dbReference type="NCBI Taxonomy" id="559292"/>
    <lineage>
        <taxon>Eukaryota</taxon>
        <taxon>Fungi</taxon>
        <taxon>Dikarya</taxon>
        <taxon>Ascomycota</taxon>
        <taxon>Saccharomycotina</taxon>
        <taxon>Saccharomycetes</taxon>
        <taxon>Saccharomycetales</taxon>
        <taxon>Saccharomycetaceae</taxon>
        <taxon>Saccharomyces</taxon>
    </lineage>
</organism>
<evidence type="ECO:0000255" key="1">
    <source>
        <dbReference type="PROSITE-ProRule" id="PRU00159"/>
    </source>
</evidence>
<evidence type="ECO:0000255" key="2">
    <source>
        <dbReference type="PROSITE-ProRule" id="PRU10027"/>
    </source>
</evidence>
<evidence type="ECO:0000256" key="3">
    <source>
        <dbReference type="SAM" id="MobiDB-lite"/>
    </source>
</evidence>
<evidence type="ECO:0000269" key="4">
    <source>
    </source>
</evidence>
<evidence type="ECO:0000269" key="5">
    <source>
    </source>
</evidence>
<evidence type="ECO:0000269" key="6">
    <source>
    </source>
</evidence>
<evidence type="ECO:0000269" key="7">
    <source>
    </source>
</evidence>
<evidence type="ECO:0000269" key="8">
    <source>
    </source>
</evidence>
<evidence type="ECO:0007744" key="9">
    <source>
    </source>
</evidence>
<evidence type="ECO:0007744" key="10">
    <source>
    </source>
</evidence>
<evidence type="ECO:0007744" key="11">
    <source>
    </source>
</evidence>
<dbReference type="EC" id="2.7.11.1"/>
<dbReference type="EMBL" id="X80836">
    <property type="protein sequence ID" value="CAA56800.1"/>
    <property type="molecule type" value="Genomic_DNA"/>
</dbReference>
<dbReference type="EMBL" id="BK006946">
    <property type="protein sequence ID" value="DAA10192.1"/>
    <property type="molecule type" value="Genomic_DNA"/>
</dbReference>
<dbReference type="PIR" id="S47452">
    <property type="entry name" value="S47452"/>
</dbReference>
<dbReference type="RefSeq" id="NP_014019.1">
    <property type="nucleotide sequence ID" value="NM_001182799.1"/>
</dbReference>
<dbReference type="SMR" id="Q03533"/>
<dbReference type="BioGRID" id="35471">
    <property type="interactions" value="179"/>
</dbReference>
<dbReference type="DIP" id="DIP-1641N"/>
<dbReference type="FunCoup" id="Q03533">
    <property type="interactions" value="404"/>
</dbReference>
<dbReference type="IntAct" id="Q03533">
    <property type="interactions" value="13"/>
</dbReference>
<dbReference type="MINT" id="Q03533"/>
<dbReference type="STRING" id="4932.YMR291W"/>
<dbReference type="GlyGen" id="Q03533">
    <property type="glycosylation" value="4 sites, 1 O-linked glycan (4 sites)"/>
</dbReference>
<dbReference type="iPTMnet" id="Q03533"/>
<dbReference type="PaxDb" id="4932-YMR291W"/>
<dbReference type="PeptideAtlas" id="Q03533"/>
<dbReference type="EnsemblFungi" id="YMR291W_mRNA">
    <property type="protein sequence ID" value="YMR291W"/>
    <property type="gene ID" value="YMR291W"/>
</dbReference>
<dbReference type="GeneID" id="855336"/>
<dbReference type="KEGG" id="sce:YMR291W"/>
<dbReference type="AGR" id="SGD:S000004905"/>
<dbReference type="SGD" id="S000004905">
    <property type="gene designation" value="TDA1"/>
</dbReference>
<dbReference type="VEuPathDB" id="FungiDB:YMR291W"/>
<dbReference type="eggNOG" id="KOG0032">
    <property type="taxonomic scope" value="Eukaryota"/>
</dbReference>
<dbReference type="GeneTree" id="ENSGT00940000176527"/>
<dbReference type="HOGENOM" id="CLU_465513_0_0_1"/>
<dbReference type="InParanoid" id="Q03533"/>
<dbReference type="OMA" id="FEGHHHV"/>
<dbReference type="OrthoDB" id="40902at2759"/>
<dbReference type="BioCyc" id="YEAST:G3O-32961-MONOMER"/>
<dbReference type="BioGRID-ORCS" id="855336">
    <property type="hits" value="10 hits in 13 CRISPR screens"/>
</dbReference>
<dbReference type="PRO" id="PR:Q03533"/>
<dbReference type="Proteomes" id="UP000002311">
    <property type="component" value="Chromosome XIII"/>
</dbReference>
<dbReference type="RNAct" id="Q03533">
    <property type="molecule type" value="protein"/>
</dbReference>
<dbReference type="GO" id="GO:0005737">
    <property type="term" value="C:cytoplasm"/>
    <property type="evidence" value="ECO:0000314"/>
    <property type="project" value="SGD"/>
</dbReference>
<dbReference type="GO" id="GO:0005634">
    <property type="term" value="C:nucleus"/>
    <property type="evidence" value="ECO:0000314"/>
    <property type="project" value="SGD"/>
</dbReference>
<dbReference type="GO" id="GO:0005524">
    <property type="term" value="F:ATP binding"/>
    <property type="evidence" value="ECO:0007669"/>
    <property type="project" value="UniProtKB-KW"/>
</dbReference>
<dbReference type="GO" id="GO:0004683">
    <property type="term" value="F:calcium/calmodulin-dependent protein kinase activity"/>
    <property type="evidence" value="ECO:0000318"/>
    <property type="project" value="GO_Central"/>
</dbReference>
<dbReference type="GO" id="GO:0005516">
    <property type="term" value="F:calmodulin binding"/>
    <property type="evidence" value="ECO:0000318"/>
    <property type="project" value="GO_Central"/>
</dbReference>
<dbReference type="GO" id="GO:0004672">
    <property type="term" value="F:protein kinase activity"/>
    <property type="evidence" value="ECO:0007005"/>
    <property type="project" value="SGD"/>
</dbReference>
<dbReference type="GO" id="GO:0106310">
    <property type="term" value="F:protein serine kinase activity"/>
    <property type="evidence" value="ECO:0007669"/>
    <property type="project" value="RHEA"/>
</dbReference>
<dbReference type="GO" id="GO:0004674">
    <property type="term" value="F:protein serine/threonine kinase activity"/>
    <property type="evidence" value="ECO:0000315"/>
    <property type="project" value="SGD"/>
</dbReference>
<dbReference type="GO" id="GO:0034599">
    <property type="term" value="P:cellular response to oxidative stress"/>
    <property type="evidence" value="ECO:0000318"/>
    <property type="project" value="GO_Central"/>
</dbReference>
<dbReference type="GO" id="GO:0007165">
    <property type="term" value="P:signal transduction"/>
    <property type="evidence" value="ECO:0000318"/>
    <property type="project" value="GO_Central"/>
</dbReference>
<dbReference type="CDD" id="cd05117">
    <property type="entry name" value="STKc_CAMK"/>
    <property type="match status" value="1"/>
</dbReference>
<dbReference type="FunFam" id="1.10.510.10:FF:001043">
    <property type="entry name" value="YMR291W-like protein"/>
    <property type="match status" value="1"/>
</dbReference>
<dbReference type="Gene3D" id="1.10.510.10">
    <property type="entry name" value="Transferase(Phosphotransferase) domain 1"/>
    <property type="match status" value="1"/>
</dbReference>
<dbReference type="InterPro" id="IPR011009">
    <property type="entry name" value="Kinase-like_dom_sf"/>
</dbReference>
<dbReference type="InterPro" id="IPR000719">
    <property type="entry name" value="Prot_kinase_dom"/>
</dbReference>
<dbReference type="InterPro" id="IPR017441">
    <property type="entry name" value="Protein_kinase_ATP_BS"/>
</dbReference>
<dbReference type="InterPro" id="IPR008271">
    <property type="entry name" value="Ser/Thr_kinase_AS"/>
</dbReference>
<dbReference type="PANTHER" id="PTHR24347">
    <property type="entry name" value="SERINE/THREONINE-PROTEIN KINASE"/>
    <property type="match status" value="1"/>
</dbReference>
<dbReference type="Pfam" id="PF00069">
    <property type="entry name" value="Pkinase"/>
    <property type="match status" value="1"/>
</dbReference>
<dbReference type="SMART" id="SM00220">
    <property type="entry name" value="S_TKc"/>
    <property type="match status" value="1"/>
</dbReference>
<dbReference type="SUPFAM" id="SSF56112">
    <property type="entry name" value="Protein kinase-like (PK-like)"/>
    <property type="match status" value="1"/>
</dbReference>
<dbReference type="PROSITE" id="PS00107">
    <property type="entry name" value="PROTEIN_KINASE_ATP"/>
    <property type="match status" value="1"/>
</dbReference>
<dbReference type="PROSITE" id="PS50011">
    <property type="entry name" value="PROTEIN_KINASE_DOM"/>
    <property type="match status" value="1"/>
</dbReference>
<dbReference type="PROSITE" id="PS00108">
    <property type="entry name" value="PROTEIN_KINASE_ST"/>
    <property type="match status" value="1"/>
</dbReference>
<keyword id="KW-0067">ATP-binding</keyword>
<keyword id="KW-0963">Cytoplasm</keyword>
<keyword id="KW-0418">Kinase</keyword>
<keyword id="KW-0547">Nucleotide-binding</keyword>
<keyword id="KW-0539">Nucleus</keyword>
<keyword id="KW-0597">Phosphoprotein</keyword>
<keyword id="KW-1185">Reference proteome</keyword>
<keyword id="KW-0723">Serine/threonine-protein kinase</keyword>
<keyword id="KW-0808">Transferase</keyword>